<protein>
    <recommendedName>
        <fullName evidence="9">Trypsin-like protease try-5</fullName>
        <ecNumber evidence="2">3.4.21.-</ecNumber>
    </recommendedName>
    <alternativeName>
        <fullName evidence="6">Trypsin-like serine protease try-5</fullName>
    </alternativeName>
</protein>
<gene>
    <name evidence="9" type="primary">try-5</name>
    <name evidence="9" type="ORF">K07B1.1</name>
</gene>
<sequence length="327" mass="35996">MRPRIIVFLFQVLVVIKGTKLKYYNDELCGRQSTYTSFMLTDAAGNTGNPTHLAPWAVQIRVKARKGDFEVICGGTLITLKHVLTAAHCFQKHFGAKKEGGEENSMSGRYCESNQRFTDSEILTRTVVTVGAMCTRLEQKYGCVNEKQNGKTLKISRFAIGDFYKTHCEQGNDIVILELESTIDDVEGANYACLPFLPEVNIQSGANVTSFGWGSDPGKGFDNAAFPMIQVLTLATETLATCEENWGTSIPFDSFCTAEEEDKNVCSGDSGGGLTFHQSDSAREFIIAIVSYGSDCVQLIGGSEPRSQINTDVRKHQKFIVNFINQA</sequence>
<accession>O01887</accession>
<comment type="function">
    <text evidence="4">Serine protease which, in males, acts as a promoting signal during mating to activate sperm.</text>
</comment>
<comment type="activity regulation">
    <text evidence="4">In the male gonad, probably maintained inactive by swm-1.</text>
</comment>
<comment type="subcellular location">
    <subcellularLocation>
        <location evidence="4 5">Secreted</location>
    </subcellularLocation>
    <subcellularLocation>
        <location evidence="4 5">Cytoplasmic vesicle</location>
        <location evidence="4 5">Secretory vesicle lumen</location>
    </subcellularLocation>
    <text evidence="4 5">In males, partially colocalizes with swm-1 in vesicles near the apical membrane of cuboidal cells (PubMed:22125495, PubMed:30470702). During the spicule insertion stage of mating, secreted by the male vas deferens and transferred together with sperm into hermaphrodites where it spreads into the uterus (PubMed:22125495).</text>
</comment>
<comment type="tissue specificity">
    <text evidence="4 5">Specifically expressed in the male gonad including the seminal vesicle, the valve region and the vas deferens.</text>
</comment>
<comment type="developmental stage">
    <text evidence="4">Expressed in male L4 larvae and adults.</text>
</comment>
<comment type="similarity">
    <text evidence="6">Belongs to the peptidase S1 family.</text>
</comment>
<dbReference type="EC" id="3.4.21.-" evidence="2"/>
<dbReference type="EMBL" id="JN651275">
    <property type="protein sequence ID" value="AEV41575.1"/>
    <property type="molecule type" value="mRNA"/>
</dbReference>
<dbReference type="EMBL" id="JN651276">
    <property type="protein sequence ID" value="AEV41576.1"/>
    <property type="molecule type" value="mRNA"/>
</dbReference>
<dbReference type="EMBL" id="JN651277">
    <property type="protein sequence ID" value="AEV41577.1"/>
    <property type="molecule type" value="mRNA"/>
</dbReference>
<dbReference type="EMBL" id="BX284605">
    <property type="protein sequence ID" value="CCD68623.1"/>
    <property type="molecule type" value="Genomic_DNA"/>
</dbReference>
<dbReference type="RefSeq" id="NP_505421.3">
    <property type="nucleotide sequence ID" value="NM_073020.6"/>
</dbReference>
<dbReference type="SMR" id="O01887"/>
<dbReference type="FunCoup" id="O01887">
    <property type="interactions" value="1"/>
</dbReference>
<dbReference type="STRING" id="6239.K07B1.1.3"/>
<dbReference type="MEROPS" id="S01.B74"/>
<dbReference type="GlyCosmos" id="O01887">
    <property type="glycosylation" value="1 site, No reported glycans"/>
</dbReference>
<dbReference type="PaxDb" id="6239-K07B1.1.1"/>
<dbReference type="PeptideAtlas" id="O01887"/>
<dbReference type="EnsemblMetazoa" id="K07B1.1.1">
    <property type="protein sequence ID" value="K07B1.1.1"/>
    <property type="gene ID" value="WBGene00006623"/>
</dbReference>
<dbReference type="GeneID" id="187088"/>
<dbReference type="KEGG" id="cel:CELE_K07B1.1"/>
<dbReference type="UCSC" id="K07B1.1">
    <property type="organism name" value="c. elegans"/>
</dbReference>
<dbReference type="AGR" id="WB:WBGene00006623"/>
<dbReference type="CTD" id="187088"/>
<dbReference type="WormBase" id="K07B1.1">
    <property type="protein sequence ID" value="CE45442"/>
    <property type="gene ID" value="WBGene00006623"/>
    <property type="gene designation" value="try-5"/>
</dbReference>
<dbReference type="eggNOG" id="KOG3627">
    <property type="taxonomic scope" value="Eukaryota"/>
</dbReference>
<dbReference type="GeneTree" id="ENSGT00940000167670"/>
<dbReference type="HOGENOM" id="CLU_006842_7_6_1"/>
<dbReference type="InParanoid" id="O01887"/>
<dbReference type="OMA" id="PTHLAPW"/>
<dbReference type="OrthoDB" id="6353231at2759"/>
<dbReference type="PhylomeDB" id="O01887"/>
<dbReference type="PRO" id="PR:O01887"/>
<dbReference type="Proteomes" id="UP000001940">
    <property type="component" value="Chromosome V"/>
</dbReference>
<dbReference type="Bgee" id="WBGene00006623">
    <property type="expression patterns" value="Expressed in adult organism and 3 other cell types or tissues"/>
</dbReference>
<dbReference type="GO" id="GO:0005615">
    <property type="term" value="C:extracellular space"/>
    <property type="evidence" value="ECO:0000314"/>
    <property type="project" value="UniProtKB"/>
</dbReference>
<dbReference type="GO" id="GO:0099503">
    <property type="term" value="C:secretory vesicle"/>
    <property type="evidence" value="ECO:0000314"/>
    <property type="project" value="UniProtKB"/>
</dbReference>
<dbReference type="GO" id="GO:0004252">
    <property type="term" value="F:serine-type endopeptidase activity"/>
    <property type="evidence" value="ECO:0007669"/>
    <property type="project" value="InterPro"/>
</dbReference>
<dbReference type="GO" id="GO:0045087">
    <property type="term" value="P:innate immune response"/>
    <property type="evidence" value="ECO:0000318"/>
    <property type="project" value="GO_Central"/>
</dbReference>
<dbReference type="GO" id="GO:0006508">
    <property type="term" value="P:proteolysis"/>
    <property type="evidence" value="ECO:0007669"/>
    <property type="project" value="UniProtKB-KW"/>
</dbReference>
<dbReference type="GO" id="GO:0007286">
    <property type="term" value="P:spermatid development"/>
    <property type="evidence" value="ECO:0000315"/>
    <property type="project" value="UniProtKB"/>
</dbReference>
<dbReference type="Gene3D" id="2.40.10.10">
    <property type="entry name" value="Trypsin-like serine proteases"/>
    <property type="match status" value="2"/>
</dbReference>
<dbReference type="InterPro" id="IPR051333">
    <property type="entry name" value="CLIP_Serine_Protease"/>
</dbReference>
<dbReference type="InterPro" id="IPR009003">
    <property type="entry name" value="Peptidase_S1_PA"/>
</dbReference>
<dbReference type="InterPro" id="IPR043504">
    <property type="entry name" value="Peptidase_S1_PA_chymotrypsin"/>
</dbReference>
<dbReference type="InterPro" id="IPR001314">
    <property type="entry name" value="Peptidase_S1A"/>
</dbReference>
<dbReference type="InterPro" id="IPR001254">
    <property type="entry name" value="Trypsin_dom"/>
</dbReference>
<dbReference type="InterPro" id="IPR018114">
    <property type="entry name" value="TRYPSIN_HIS"/>
</dbReference>
<dbReference type="PANTHER" id="PTHR24260">
    <property type="match status" value="1"/>
</dbReference>
<dbReference type="PANTHER" id="PTHR24260:SF141">
    <property type="entry name" value="TRYPSIN-LIKE PROTEASE TRY-5"/>
    <property type="match status" value="1"/>
</dbReference>
<dbReference type="Pfam" id="PF00089">
    <property type="entry name" value="Trypsin"/>
    <property type="match status" value="2"/>
</dbReference>
<dbReference type="PRINTS" id="PR00722">
    <property type="entry name" value="CHYMOTRYPSIN"/>
</dbReference>
<dbReference type="SMART" id="SM00020">
    <property type="entry name" value="Tryp_SPc"/>
    <property type="match status" value="1"/>
</dbReference>
<dbReference type="SUPFAM" id="SSF50494">
    <property type="entry name" value="Trypsin-like serine proteases"/>
    <property type="match status" value="1"/>
</dbReference>
<dbReference type="PROSITE" id="PS50240">
    <property type="entry name" value="TRYPSIN_DOM"/>
    <property type="match status" value="1"/>
</dbReference>
<dbReference type="PROSITE" id="PS00134">
    <property type="entry name" value="TRYPSIN_HIS"/>
    <property type="match status" value="1"/>
</dbReference>
<reference evidence="7" key="1">
    <citation type="journal article" date="2011" name="PLoS Genet.">
        <title>TRY-5 Is a Sperm-Activating Protease in Caenorhabditis elegans Seminal Fluid.</title>
        <authorList>
            <person name="Smith J.R."/>
            <person name="Stanfield G.M."/>
        </authorList>
    </citation>
    <scope>NUCLEOTIDE SEQUENCE [MRNA]</scope>
    <scope>FUNCTION</scope>
    <scope>ACTIVITY REGULATION</scope>
    <scope>SUBCELLULAR LOCATION</scope>
    <scope>TISSUE SPECIFICITY</scope>
    <scope>DEVELOPMENTAL STAGE</scope>
    <scope>MUTAGENESIS OF MET-1; CYS-29 AND 308-GLY--ALA-327</scope>
</reference>
<reference evidence="8" key="2">
    <citation type="journal article" date="1998" name="Science">
        <title>Genome sequence of the nematode C. elegans: a platform for investigating biology.</title>
        <authorList>
            <consortium name="The C. elegans sequencing consortium"/>
        </authorList>
    </citation>
    <scope>NUCLEOTIDE SEQUENCE [LARGE SCALE GENOMIC DNA]</scope>
    <source>
        <strain evidence="8">Bristol N2</strain>
    </source>
</reference>
<reference evidence="6" key="3">
    <citation type="journal article" date="2018" name="Development">
        <title>Soma-germ line interactions and a role for muscle in the regulation of C. elegans sperm motility.</title>
        <authorList>
            <person name="Chavez D.R."/>
            <person name="Snow A.K."/>
            <person name="Smith J.R."/>
            <person name="Stanfield G.M."/>
        </authorList>
    </citation>
    <scope>SUBCELLULAR LOCATION</scope>
    <scope>TISSUE SPECIFICITY</scope>
</reference>
<evidence type="ECO:0000255" key="1"/>
<evidence type="ECO:0000255" key="2">
    <source>
        <dbReference type="PROSITE-ProRule" id="PRU00274"/>
    </source>
</evidence>
<evidence type="ECO:0000255" key="3">
    <source>
        <dbReference type="PROSITE-ProRule" id="PRU00498"/>
    </source>
</evidence>
<evidence type="ECO:0000269" key="4">
    <source>
    </source>
</evidence>
<evidence type="ECO:0000269" key="5">
    <source>
    </source>
</evidence>
<evidence type="ECO:0000305" key="6"/>
<evidence type="ECO:0000312" key="7">
    <source>
        <dbReference type="EMBL" id="AEV41575.1"/>
    </source>
</evidence>
<evidence type="ECO:0000312" key="8">
    <source>
        <dbReference type="Proteomes" id="UP000001940"/>
    </source>
</evidence>
<evidence type="ECO:0000312" key="9">
    <source>
        <dbReference type="WormBase" id="K07B1.1"/>
    </source>
</evidence>
<proteinExistence type="evidence at protein level"/>
<name>TRYL5_CAEEL</name>
<keyword id="KW-0968">Cytoplasmic vesicle</keyword>
<keyword id="KW-0221">Differentiation</keyword>
<keyword id="KW-1015">Disulfide bond</keyword>
<keyword id="KW-0325">Glycoprotein</keyword>
<keyword id="KW-0378">Hydrolase</keyword>
<keyword id="KW-0645">Protease</keyword>
<keyword id="KW-1185">Reference proteome</keyword>
<keyword id="KW-0964">Secreted</keyword>
<keyword id="KW-0720">Serine protease</keyword>
<keyword id="KW-0732">Signal</keyword>
<keyword id="KW-0744">Spermatogenesis</keyword>
<organism evidence="8">
    <name type="scientific">Caenorhabditis elegans</name>
    <dbReference type="NCBI Taxonomy" id="6239"/>
    <lineage>
        <taxon>Eukaryota</taxon>
        <taxon>Metazoa</taxon>
        <taxon>Ecdysozoa</taxon>
        <taxon>Nematoda</taxon>
        <taxon>Chromadorea</taxon>
        <taxon>Rhabditida</taxon>
        <taxon>Rhabditina</taxon>
        <taxon>Rhabditomorpha</taxon>
        <taxon>Rhabditoidea</taxon>
        <taxon>Rhabditidae</taxon>
        <taxon>Peloderinae</taxon>
        <taxon>Caenorhabditis</taxon>
    </lineage>
</organism>
<feature type="signal peptide" evidence="1">
    <location>
        <begin position="1"/>
        <end position="21"/>
    </location>
</feature>
<feature type="chain" id="PRO_5015096730" description="Trypsin-like protease try-5" evidence="1">
    <location>
        <begin position="22"/>
        <end position="327"/>
    </location>
</feature>
<feature type="domain" description="Peptidase S1" evidence="2">
    <location>
        <begin position="43"/>
        <end position="327"/>
    </location>
</feature>
<feature type="active site" description="Charge relay system" evidence="2">
    <location>
        <position position="88"/>
    </location>
</feature>
<feature type="active site" description="Charge relay system" evidence="2">
    <location>
        <position position="173"/>
    </location>
</feature>
<feature type="active site" description="Charge relay system" evidence="2">
    <location>
        <position position="270"/>
    </location>
</feature>
<feature type="glycosylation site" description="N-linked (GlcNAc...) asparagine" evidence="3">
    <location>
        <position position="207"/>
    </location>
</feature>
<feature type="disulfide bond" evidence="2">
    <location>
        <begin position="73"/>
        <end position="89"/>
    </location>
</feature>
<feature type="disulfide bond" evidence="2">
    <location>
        <begin position="242"/>
        <end position="256"/>
    </location>
</feature>
<feature type="disulfide bond" evidence="2">
    <location>
        <begin position="266"/>
        <end position="296"/>
    </location>
</feature>
<feature type="mutagenesis site" description="In jn21; in males, suppresses premature sperm activation in a swm-1 (me66) mutant background." evidence="4">
    <original>M</original>
    <variation>T</variation>
    <location>
        <position position="1"/>
    </location>
</feature>
<feature type="mutagenesis site" description="In jn2; male and hermaphrodite fertility is normal. Suppresses premature sperm activation in a swm-1 (me66) mutant background." evidence="4">
    <original>C</original>
    <variation>Y</variation>
    <location>
        <position position="29"/>
    </location>
</feature>
<feature type="mutagenesis site" description="In jn13; in males, suppresses premature sperm activation in a swm-1 (me66) mutant background." evidence="4">
    <location>
        <begin position="308"/>
        <end position="327"/>
    </location>
</feature>